<comment type="function">
    <text evidence="1">Catalyzes the transfer of an acetyl group from acetyl-CoA to tetrahydrodipicolinate.</text>
</comment>
<comment type="catalytic activity">
    <reaction evidence="1">
        <text>(S)-2,3,4,5-tetrahydrodipicolinate + acetyl-CoA + H2O = L-2-acetamido-6-oxoheptanedioate + CoA</text>
        <dbReference type="Rhea" id="RHEA:13085"/>
        <dbReference type="ChEBI" id="CHEBI:15377"/>
        <dbReference type="ChEBI" id="CHEBI:16845"/>
        <dbReference type="ChEBI" id="CHEBI:57287"/>
        <dbReference type="ChEBI" id="CHEBI:57288"/>
        <dbReference type="ChEBI" id="CHEBI:58117"/>
        <dbReference type="EC" id="2.3.1.89"/>
    </reaction>
</comment>
<comment type="pathway">
    <text evidence="1">Amino-acid biosynthesis; L-lysine biosynthesis via DAP pathway; LL-2,6-diaminopimelate from (S)-tetrahydrodipicolinate (acetylase route): step 1/3.</text>
</comment>
<comment type="similarity">
    <text evidence="1">Belongs to the transferase hexapeptide repeat family. DapH subfamily.</text>
</comment>
<name>DAPH_STRPI</name>
<accession>B1I9G3</accession>
<protein>
    <recommendedName>
        <fullName evidence="1">2,3,4,5-tetrahydropyridine-2,6-dicarboxylate N-acetyltransferase</fullName>
        <ecNumber evidence="1">2.3.1.89</ecNumber>
    </recommendedName>
    <alternativeName>
        <fullName evidence="1">Tetrahydrodipicolinate N-acetyltransferase</fullName>
        <shortName evidence="1">THP acetyltransferase</shortName>
        <shortName evidence="1">Tetrahydropicolinate acetylase</shortName>
    </alternativeName>
</protein>
<reference key="1">
    <citation type="journal article" date="2010" name="Genome Biol.">
        <title>Structure and dynamics of the pan-genome of Streptococcus pneumoniae and closely related species.</title>
        <authorList>
            <person name="Donati C."/>
            <person name="Hiller N.L."/>
            <person name="Tettelin H."/>
            <person name="Muzzi A."/>
            <person name="Croucher N.J."/>
            <person name="Angiuoli S.V."/>
            <person name="Oggioni M."/>
            <person name="Dunning Hotopp J.C."/>
            <person name="Hu F.Z."/>
            <person name="Riley D.R."/>
            <person name="Covacci A."/>
            <person name="Mitchell T.J."/>
            <person name="Bentley S.D."/>
            <person name="Kilian M."/>
            <person name="Ehrlich G.D."/>
            <person name="Rappuoli R."/>
            <person name="Moxon E.R."/>
            <person name="Masignani V."/>
        </authorList>
    </citation>
    <scope>NUCLEOTIDE SEQUENCE [LARGE SCALE GENOMIC DNA]</scope>
    <source>
        <strain>Hungary19A-6</strain>
    </source>
</reference>
<proteinExistence type="inferred from homology"/>
<sequence length="232" mass="23920">MTATKMNAQEIIQFIANAEKKTSVKVTFEGQLATAVPSSVVKLGNVLFGDWKDVAPLLEGLVENQDYVVEQDARNSAVPLLDKRAINARIEPGAIIRDQVEIGDNAVIMMGAVINIGAEIGAGTMIDMGAILGGRAIVGKNSHVGAGAVLAGVIEPASAEPVRVGDNVLIGANAVVIEGVQIGSGSVVAAGAIVTQDVPENVVVAGVPARIIKEIDAQTQQKTALEDALRTL</sequence>
<organism>
    <name type="scientific">Streptococcus pneumoniae (strain Hungary19A-6)</name>
    <dbReference type="NCBI Taxonomy" id="487214"/>
    <lineage>
        <taxon>Bacteria</taxon>
        <taxon>Bacillati</taxon>
        <taxon>Bacillota</taxon>
        <taxon>Bacilli</taxon>
        <taxon>Lactobacillales</taxon>
        <taxon>Streptococcaceae</taxon>
        <taxon>Streptococcus</taxon>
    </lineage>
</organism>
<feature type="chain" id="PRO_0000376712" description="2,3,4,5-tetrahydropyridine-2,6-dicarboxylate N-acetyltransferase">
    <location>
        <begin position="1"/>
        <end position="232"/>
    </location>
</feature>
<keyword id="KW-0012">Acyltransferase</keyword>
<keyword id="KW-0028">Amino-acid biosynthesis</keyword>
<keyword id="KW-0220">Diaminopimelate biosynthesis</keyword>
<keyword id="KW-0457">Lysine biosynthesis</keyword>
<keyword id="KW-0677">Repeat</keyword>
<keyword id="KW-0808">Transferase</keyword>
<evidence type="ECO:0000255" key="1">
    <source>
        <dbReference type="HAMAP-Rule" id="MF_01691"/>
    </source>
</evidence>
<dbReference type="EC" id="2.3.1.89" evidence="1"/>
<dbReference type="EMBL" id="CP000936">
    <property type="protein sequence ID" value="ACA35510.1"/>
    <property type="molecule type" value="Genomic_DNA"/>
</dbReference>
<dbReference type="SMR" id="B1I9G3"/>
<dbReference type="KEGG" id="spv:SPH_2285"/>
<dbReference type="HOGENOM" id="CLU_103751_0_0_9"/>
<dbReference type="UniPathway" id="UPA00034">
    <property type="reaction ID" value="UER00022"/>
</dbReference>
<dbReference type="Proteomes" id="UP000002163">
    <property type="component" value="Chromosome"/>
</dbReference>
<dbReference type="GO" id="GO:0047200">
    <property type="term" value="F:tetrahydrodipicolinate N-acetyltransferase activity"/>
    <property type="evidence" value="ECO:0007669"/>
    <property type="project" value="UniProtKB-EC"/>
</dbReference>
<dbReference type="GO" id="GO:0019877">
    <property type="term" value="P:diaminopimelate biosynthetic process"/>
    <property type="evidence" value="ECO:0007669"/>
    <property type="project" value="UniProtKB-UniRule"/>
</dbReference>
<dbReference type="GO" id="GO:0009089">
    <property type="term" value="P:lysine biosynthetic process via diaminopimelate"/>
    <property type="evidence" value="ECO:0007669"/>
    <property type="project" value="UniProtKB-UniRule"/>
</dbReference>
<dbReference type="Gene3D" id="2.160.10.10">
    <property type="entry name" value="Hexapeptide repeat proteins"/>
    <property type="match status" value="1"/>
</dbReference>
<dbReference type="Gene3D" id="3.30.70.250">
    <property type="entry name" value="Malonyl-CoA ACP transacylase, ACP-binding"/>
    <property type="match status" value="1"/>
</dbReference>
<dbReference type="HAMAP" id="MF_01691">
    <property type="entry name" value="DapH"/>
    <property type="match status" value="1"/>
</dbReference>
<dbReference type="InterPro" id="IPR019873">
    <property type="entry name" value="DapH"/>
</dbReference>
<dbReference type="InterPro" id="IPR013710">
    <property type="entry name" value="DapH_N"/>
</dbReference>
<dbReference type="InterPro" id="IPR001451">
    <property type="entry name" value="Hexapep"/>
</dbReference>
<dbReference type="InterPro" id="IPR018357">
    <property type="entry name" value="Hexapep_transf_CS"/>
</dbReference>
<dbReference type="InterPro" id="IPR050179">
    <property type="entry name" value="Trans_hexapeptide_repeat"/>
</dbReference>
<dbReference type="InterPro" id="IPR011004">
    <property type="entry name" value="Trimer_LpxA-like_sf"/>
</dbReference>
<dbReference type="NCBIfam" id="TIGR03532">
    <property type="entry name" value="DapD_Ac"/>
    <property type="match status" value="1"/>
</dbReference>
<dbReference type="PANTHER" id="PTHR43300:SF10">
    <property type="entry name" value="2,3,4,5-TETRAHYDROPYRIDINE-2,6-DICARBOXYLATE N-ACETYLTRANSFERASE"/>
    <property type="match status" value="1"/>
</dbReference>
<dbReference type="PANTHER" id="PTHR43300">
    <property type="entry name" value="ACETYLTRANSFERASE"/>
    <property type="match status" value="1"/>
</dbReference>
<dbReference type="Pfam" id="PF08503">
    <property type="entry name" value="DapH_N"/>
    <property type="match status" value="1"/>
</dbReference>
<dbReference type="Pfam" id="PF00132">
    <property type="entry name" value="Hexapep"/>
    <property type="match status" value="1"/>
</dbReference>
<dbReference type="Pfam" id="PF14602">
    <property type="entry name" value="Hexapep_2"/>
    <property type="match status" value="2"/>
</dbReference>
<dbReference type="SUPFAM" id="SSF51161">
    <property type="entry name" value="Trimeric LpxA-like enzymes"/>
    <property type="match status" value="1"/>
</dbReference>
<dbReference type="PROSITE" id="PS00101">
    <property type="entry name" value="HEXAPEP_TRANSFERASES"/>
    <property type="match status" value="2"/>
</dbReference>
<gene>
    <name evidence="1" type="primary">dapH</name>
    <name type="ordered locus">SPH_2285</name>
</gene>